<keyword id="KW-0456">Lyase</keyword>
<keyword id="KW-0663">Pyridoxal phosphate</keyword>
<organism>
    <name type="scientific">Bacillus cereus (strain AH187)</name>
    <dbReference type="NCBI Taxonomy" id="405534"/>
    <lineage>
        <taxon>Bacteria</taxon>
        <taxon>Bacillati</taxon>
        <taxon>Bacillota</taxon>
        <taxon>Bacilli</taxon>
        <taxon>Bacillales</taxon>
        <taxon>Bacillaceae</taxon>
        <taxon>Bacillus</taxon>
        <taxon>Bacillus cereus group</taxon>
    </lineage>
</organism>
<reference key="1">
    <citation type="submission" date="2008-10" db="EMBL/GenBank/DDBJ databases">
        <title>Genome sequence of Bacillus cereus AH187.</title>
        <authorList>
            <person name="Dodson R.J."/>
            <person name="Durkin A.S."/>
            <person name="Rosovitz M.J."/>
            <person name="Rasko D.A."/>
            <person name="Kolsto A.B."/>
            <person name="Okstad O.A."/>
            <person name="Ravel J."/>
            <person name="Sutton G."/>
        </authorList>
    </citation>
    <scope>NUCLEOTIDE SEQUENCE [LARGE SCALE GENOMIC DNA]</scope>
    <source>
        <strain>AH187</strain>
    </source>
</reference>
<name>SDHD_BACC7</name>
<accession>B7HMG6</accession>
<protein>
    <recommendedName>
        <fullName evidence="1">Probable D-serine dehydratase</fullName>
        <ecNumber evidence="1">4.3.1.18</ecNumber>
    </recommendedName>
    <alternativeName>
        <fullName evidence="1">D-serine deaminase</fullName>
        <shortName evidence="1">DSD</shortName>
    </alternativeName>
</protein>
<sequence>MKGIEKLKEGYPLLNKLIATEEVFWVNPNMEKYETAIKDSPLSEENVKDAEERLKRFASYIAKVFPETKETKGIIESPLLKIPSMKQALEKHYKQPILGELLLKCDSHLPISGSIKARGGIYEVLKHAEQLALQHGMLTEEDDYSILDSDTCREFFAKYSIAVGSTGNLGLSIGIMSAKLGFNVTVHMSADAKQWKKDLLRSKGVNVIEYEADYSKAVKEGRQQADTDPSCYFVDDENSHDLFLGYAVAASRLQKQLEELEIVVDEEHPLFVYLPCGVGGGPGGVAFGLKLLYKDNVHCFFAEPTHSPCMLLGLMTGLHDKIAVQDIGIDNVTDADGLAVGRPSGFVGKTMEPFLSGNYTVSDEELYRLLKELADTENIYLEPSALAGMIGPVKVCKEDAYLQEQQLMKEMKKGTHIVWGTGGSMVPEDVINGYYKTGERLTI</sequence>
<comment type="catalytic activity">
    <reaction evidence="1">
        <text>D-serine = pyruvate + NH4(+)</text>
        <dbReference type="Rhea" id="RHEA:13977"/>
        <dbReference type="ChEBI" id="CHEBI:15361"/>
        <dbReference type="ChEBI" id="CHEBI:28938"/>
        <dbReference type="ChEBI" id="CHEBI:35247"/>
        <dbReference type="EC" id="4.3.1.18"/>
    </reaction>
</comment>
<comment type="cofactor">
    <cofactor evidence="1">
        <name>pyridoxal 5'-phosphate</name>
        <dbReference type="ChEBI" id="CHEBI:597326"/>
    </cofactor>
</comment>
<comment type="similarity">
    <text evidence="1">Belongs to the serine/threonine dehydratase family. DsdA subfamily.</text>
</comment>
<proteinExistence type="inferred from homology"/>
<dbReference type="EC" id="4.3.1.18" evidence="1"/>
<dbReference type="EMBL" id="CP001177">
    <property type="protein sequence ID" value="ACJ80043.1"/>
    <property type="molecule type" value="Genomic_DNA"/>
</dbReference>
<dbReference type="SMR" id="B7HMG6"/>
<dbReference type="KEGG" id="bcr:BCAH187_A1907"/>
<dbReference type="HOGENOM" id="CLU_035707_0_0_9"/>
<dbReference type="Proteomes" id="UP000002214">
    <property type="component" value="Chromosome"/>
</dbReference>
<dbReference type="GO" id="GO:0008721">
    <property type="term" value="F:D-serine ammonia-lyase activity"/>
    <property type="evidence" value="ECO:0007669"/>
    <property type="project" value="UniProtKB-EC"/>
</dbReference>
<dbReference type="GO" id="GO:0016836">
    <property type="term" value="F:hydro-lyase activity"/>
    <property type="evidence" value="ECO:0007669"/>
    <property type="project" value="UniProtKB-UniRule"/>
</dbReference>
<dbReference type="GO" id="GO:0030170">
    <property type="term" value="F:pyridoxal phosphate binding"/>
    <property type="evidence" value="ECO:0007669"/>
    <property type="project" value="InterPro"/>
</dbReference>
<dbReference type="GO" id="GO:0036088">
    <property type="term" value="P:D-serine catabolic process"/>
    <property type="evidence" value="ECO:0007669"/>
    <property type="project" value="TreeGrafter"/>
</dbReference>
<dbReference type="GO" id="GO:0009097">
    <property type="term" value="P:isoleucine biosynthetic process"/>
    <property type="evidence" value="ECO:0007669"/>
    <property type="project" value="TreeGrafter"/>
</dbReference>
<dbReference type="CDD" id="cd06447">
    <property type="entry name" value="D-Ser-dehyd"/>
    <property type="match status" value="1"/>
</dbReference>
<dbReference type="FunFam" id="3.40.50.1100:FF:000018">
    <property type="entry name" value="D-serine dehydratase"/>
    <property type="match status" value="1"/>
</dbReference>
<dbReference type="Gene3D" id="3.40.50.1100">
    <property type="match status" value="2"/>
</dbReference>
<dbReference type="HAMAP" id="MF_01030">
    <property type="entry name" value="D_Ser_dehydrat"/>
    <property type="match status" value="1"/>
</dbReference>
<dbReference type="InterPro" id="IPR011780">
    <property type="entry name" value="D_Ser_am_lyase"/>
</dbReference>
<dbReference type="InterPro" id="IPR050147">
    <property type="entry name" value="Ser/Thr_Dehydratase"/>
</dbReference>
<dbReference type="InterPro" id="IPR000634">
    <property type="entry name" value="Ser/Thr_deHydtase_PyrdxlP-BS"/>
</dbReference>
<dbReference type="InterPro" id="IPR001926">
    <property type="entry name" value="TrpB-like_PALP"/>
</dbReference>
<dbReference type="InterPro" id="IPR036052">
    <property type="entry name" value="TrpB-like_PALP_sf"/>
</dbReference>
<dbReference type="NCBIfam" id="TIGR02035">
    <property type="entry name" value="D_Ser_am_lyase"/>
    <property type="match status" value="1"/>
</dbReference>
<dbReference type="NCBIfam" id="NF002823">
    <property type="entry name" value="PRK02991.1"/>
    <property type="match status" value="1"/>
</dbReference>
<dbReference type="PANTHER" id="PTHR48078:SF9">
    <property type="entry name" value="D-SERINE DEHYDRATASE"/>
    <property type="match status" value="1"/>
</dbReference>
<dbReference type="PANTHER" id="PTHR48078">
    <property type="entry name" value="THREONINE DEHYDRATASE, MITOCHONDRIAL-RELATED"/>
    <property type="match status" value="1"/>
</dbReference>
<dbReference type="Pfam" id="PF00291">
    <property type="entry name" value="PALP"/>
    <property type="match status" value="1"/>
</dbReference>
<dbReference type="SUPFAM" id="SSF53686">
    <property type="entry name" value="Tryptophan synthase beta subunit-like PLP-dependent enzymes"/>
    <property type="match status" value="1"/>
</dbReference>
<dbReference type="PROSITE" id="PS00165">
    <property type="entry name" value="DEHYDRATASE_SER_THR"/>
    <property type="match status" value="1"/>
</dbReference>
<feature type="chain" id="PRO_1000135757" description="Probable D-serine dehydratase">
    <location>
        <begin position="1"/>
        <end position="443"/>
    </location>
</feature>
<feature type="modified residue" description="N6-(pyridoxal phosphate)lysine" evidence="1">
    <location>
        <position position="116"/>
    </location>
</feature>
<evidence type="ECO:0000255" key="1">
    <source>
        <dbReference type="HAMAP-Rule" id="MF_01030"/>
    </source>
</evidence>
<gene>
    <name evidence="1" type="primary">dsdA</name>
    <name type="ordered locus">BCAH187_A1907</name>
</gene>